<dbReference type="EC" id="2.7.7.6" evidence="1"/>
<dbReference type="EMBL" id="AE009439">
    <property type="protein sequence ID" value="AAM02687.1"/>
    <property type="molecule type" value="Genomic_DNA"/>
</dbReference>
<dbReference type="SMR" id="Q8TVB8"/>
<dbReference type="FunCoup" id="Q8TVB8">
    <property type="interactions" value="64"/>
</dbReference>
<dbReference type="STRING" id="190192.MK1474"/>
<dbReference type="PaxDb" id="190192-MK1474"/>
<dbReference type="EnsemblBacteria" id="AAM02687">
    <property type="protein sequence ID" value="AAM02687"/>
    <property type="gene ID" value="MK1474"/>
</dbReference>
<dbReference type="KEGG" id="mka:MK1474"/>
<dbReference type="PATRIC" id="fig|190192.8.peg.1630"/>
<dbReference type="HOGENOM" id="CLU_038421_3_1_2"/>
<dbReference type="InParanoid" id="Q8TVB8"/>
<dbReference type="Proteomes" id="UP000001826">
    <property type="component" value="Chromosome"/>
</dbReference>
<dbReference type="GO" id="GO:0005737">
    <property type="term" value="C:cytoplasm"/>
    <property type="evidence" value="ECO:0007669"/>
    <property type="project" value="UniProtKB-SubCell"/>
</dbReference>
<dbReference type="GO" id="GO:0000428">
    <property type="term" value="C:DNA-directed RNA polymerase complex"/>
    <property type="evidence" value="ECO:0007669"/>
    <property type="project" value="UniProtKB-KW"/>
</dbReference>
<dbReference type="GO" id="GO:0003677">
    <property type="term" value="F:DNA binding"/>
    <property type="evidence" value="ECO:0007669"/>
    <property type="project" value="UniProtKB-UniRule"/>
</dbReference>
<dbReference type="GO" id="GO:0003899">
    <property type="term" value="F:DNA-directed RNA polymerase activity"/>
    <property type="evidence" value="ECO:0007669"/>
    <property type="project" value="UniProtKB-UniRule"/>
</dbReference>
<dbReference type="GO" id="GO:0046983">
    <property type="term" value="F:protein dimerization activity"/>
    <property type="evidence" value="ECO:0007669"/>
    <property type="project" value="InterPro"/>
</dbReference>
<dbReference type="GO" id="GO:0006351">
    <property type="term" value="P:DNA-templated transcription"/>
    <property type="evidence" value="ECO:0007669"/>
    <property type="project" value="UniProtKB-UniRule"/>
</dbReference>
<dbReference type="CDD" id="cd07030">
    <property type="entry name" value="RNAP_D"/>
    <property type="match status" value="1"/>
</dbReference>
<dbReference type="Gene3D" id="3.30.70.20">
    <property type="match status" value="1"/>
</dbReference>
<dbReference type="Gene3D" id="2.170.120.12">
    <property type="entry name" value="DNA-directed RNA polymerase, insert domain"/>
    <property type="match status" value="1"/>
</dbReference>
<dbReference type="Gene3D" id="3.30.1360.10">
    <property type="entry name" value="RNA polymerase, RBP11-like subunit"/>
    <property type="match status" value="1"/>
</dbReference>
<dbReference type="HAMAP" id="MF_00320">
    <property type="entry name" value="RNApol_arch_Rpo3"/>
    <property type="match status" value="1"/>
</dbReference>
<dbReference type="InterPro" id="IPR001514">
    <property type="entry name" value="DNA-dir_RNA_pol_30-40kDasu_CS"/>
</dbReference>
<dbReference type="InterPro" id="IPR011262">
    <property type="entry name" value="DNA-dir_RNA_pol_insert"/>
</dbReference>
<dbReference type="InterPro" id="IPR011263">
    <property type="entry name" value="DNA-dir_RNA_pol_RpoA/D/Rpb3"/>
</dbReference>
<dbReference type="InterPro" id="IPR036603">
    <property type="entry name" value="RBP11-like"/>
</dbReference>
<dbReference type="InterPro" id="IPR022842">
    <property type="entry name" value="RNAP_Rpo3/Rpb3/RPAC1"/>
</dbReference>
<dbReference type="InterPro" id="IPR036643">
    <property type="entry name" value="RNApol_insert_sf"/>
</dbReference>
<dbReference type="InterPro" id="IPR050518">
    <property type="entry name" value="Rpo3/RPB3_RNA_Pol_subunit"/>
</dbReference>
<dbReference type="NCBIfam" id="NF001988">
    <property type="entry name" value="PRK00783.1"/>
    <property type="match status" value="1"/>
</dbReference>
<dbReference type="PANTHER" id="PTHR11800">
    <property type="entry name" value="DNA-DIRECTED RNA POLYMERASE"/>
    <property type="match status" value="1"/>
</dbReference>
<dbReference type="PANTHER" id="PTHR11800:SF2">
    <property type="entry name" value="DNA-DIRECTED RNA POLYMERASE II SUBUNIT RPB3"/>
    <property type="match status" value="1"/>
</dbReference>
<dbReference type="Pfam" id="PF01000">
    <property type="entry name" value="RNA_pol_A_bac"/>
    <property type="match status" value="1"/>
</dbReference>
<dbReference type="Pfam" id="PF01193">
    <property type="entry name" value="RNA_pol_L"/>
    <property type="match status" value="1"/>
</dbReference>
<dbReference type="SMART" id="SM00662">
    <property type="entry name" value="RPOLD"/>
    <property type="match status" value="1"/>
</dbReference>
<dbReference type="SUPFAM" id="SSF56553">
    <property type="entry name" value="Insert subdomain of RNA polymerase alpha subunit"/>
    <property type="match status" value="1"/>
</dbReference>
<dbReference type="SUPFAM" id="SSF55257">
    <property type="entry name" value="RBP11-like subunits of RNA polymerase"/>
    <property type="match status" value="1"/>
</dbReference>
<dbReference type="PROSITE" id="PS00446">
    <property type="entry name" value="RNA_POL_D_30KD"/>
    <property type="match status" value="1"/>
</dbReference>
<keyword id="KW-0963">Cytoplasm</keyword>
<keyword id="KW-0240">DNA-directed RNA polymerase</keyword>
<keyword id="KW-0548">Nucleotidyltransferase</keyword>
<keyword id="KW-1185">Reference proteome</keyword>
<keyword id="KW-0804">Transcription</keyword>
<keyword id="KW-0808">Transferase</keyword>
<evidence type="ECO:0000255" key="1">
    <source>
        <dbReference type="HAMAP-Rule" id="MF_00320"/>
    </source>
</evidence>
<gene>
    <name evidence="1" type="primary">rpo3</name>
    <name evidence="1" type="synonym">rpoD</name>
    <name type="ordered locus">MK1474</name>
</gene>
<comment type="function">
    <text evidence="1">DNA-dependent RNA polymerase (RNAP) catalyzes the transcription of DNA into RNA using the four ribonucleoside triphosphates as substrates.</text>
</comment>
<comment type="catalytic activity">
    <reaction evidence="1">
        <text>RNA(n) + a ribonucleoside 5'-triphosphate = RNA(n+1) + diphosphate</text>
        <dbReference type="Rhea" id="RHEA:21248"/>
        <dbReference type="Rhea" id="RHEA-COMP:14527"/>
        <dbReference type="Rhea" id="RHEA-COMP:17342"/>
        <dbReference type="ChEBI" id="CHEBI:33019"/>
        <dbReference type="ChEBI" id="CHEBI:61557"/>
        <dbReference type="ChEBI" id="CHEBI:140395"/>
        <dbReference type="EC" id="2.7.7.6"/>
    </reaction>
</comment>
<comment type="subunit">
    <text evidence="1">Part of the RNA polymerase complex.</text>
</comment>
<comment type="subcellular location">
    <subcellularLocation>
        <location evidence="1">Cytoplasm</location>
    </subcellularLocation>
</comment>
<comment type="similarity">
    <text evidence="1">Belongs to the archaeal Rpo3/eukaryotic RPB3 RNA polymerase subunit family.</text>
</comment>
<protein>
    <recommendedName>
        <fullName evidence="1">DNA-directed RNA polymerase subunit Rpo3</fullName>
        <ecNumber evidence="1">2.7.7.6</ecNumber>
    </recommendedName>
    <alternativeName>
        <fullName evidence="1">DNA-directed RNA polymerase subunit D</fullName>
    </alternativeName>
</protein>
<feature type="chain" id="PRO_0000132755" description="DNA-directed RNA polymerase subunit Rpo3">
    <location>
        <begin position="1"/>
        <end position="275"/>
    </location>
</feature>
<organism>
    <name type="scientific">Methanopyrus kandleri (strain AV19 / DSM 6324 / JCM 9639 / NBRC 100938)</name>
    <dbReference type="NCBI Taxonomy" id="190192"/>
    <lineage>
        <taxon>Archaea</taxon>
        <taxon>Methanobacteriati</taxon>
        <taxon>Methanobacteriota</taxon>
        <taxon>Methanomada group</taxon>
        <taxon>Methanopyri</taxon>
        <taxon>Methanopyrales</taxon>
        <taxon>Methanopyraceae</taxon>
        <taxon>Methanopyrus</taxon>
    </lineage>
</organism>
<sequence length="275" mass="31526">MSPLRVRLYDYRKADVERATFIIEETSAEFVNTIRRALYTLVPTLRIEEVIIYENDTPMYDEMLAHRLGLIPLRVDDIDQFELPDLCDCGGKGCEKCQVRAELEVEGPTKVYARDLKFDHPDVEPAFPDTLITEVGEDQRIRLEVIAVPGLGLEHAKWKPVSAVGYKGLPELEIDEDKLKEKKITYECPQGIIRIENGEVVHIDEDRLPECRMYKEYERETDGAVRVRLRDDAFVFNVETDGSMSLDTAILKALDAIEHKLESLKKNLQKEVSGE</sequence>
<reference key="1">
    <citation type="journal article" date="2002" name="Proc. Natl. Acad. Sci. U.S.A.">
        <title>The complete genome of hyperthermophile Methanopyrus kandleri AV19 and monophyly of archaeal methanogens.</title>
        <authorList>
            <person name="Slesarev A.I."/>
            <person name="Mezhevaya K.V."/>
            <person name="Makarova K.S."/>
            <person name="Polushin N.N."/>
            <person name="Shcherbinina O.V."/>
            <person name="Shakhova V.V."/>
            <person name="Belova G.I."/>
            <person name="Aravind L."/>
            <person name="Natale D.A."/>
            <person name="Rogozin I.B."/>
            <person name="Tatusov R.L."/>
            <person name="Wolf Y.I."/>
            <person name="Stetter K.O."/>
            <person name="Malykh A.G."/>
            <person name="Koonin E.V."/>
            <person name="Kozyavkin S.A."/>
        </authorList>
    </citation>
    <scope>NUCLEOTIDE SEQUENCE [LARGE SCALE GENOMIC DNA]</scope>
    <source>
        <strain>AV19 / DSM 6324 / JCM 9639 / NBRC 100938</strain>
    </source>
</reference>
<proteinExistence type="inferred from homology"/>
<accession>Q8TVB8</accession>
<name>RPO3_METKA</name>